<accession>Q2G1X0</accession>
<sequence length="319" mass="35973">MKTRIVSSVTTTLLLGSILMNPVANAADSDINIKTGTTDIGSNTTVKTGDLVTYDKENGMHKKVFYSFIDDKNHNKKLLVIRTKGTIAGQYRVYSEEGANKSGLAWPSAFKVQLQLPDNEVAQISDYYPRNSIDTKEYMSTLTYGFNGNVTGDDTGKIGGLIGANVSIGHTLKYVQPDFKTILESPTDKKVGWKVIFNNMVNQNWGPYDRDSWNPVYGNQLFMKTRNGSMKAADNFLDPNKASSLLSSGFSPDFATVITMDRKASKQQTNIDVIYERVRDDYQLHWTSTNWKGTNTKDKWIDRSSERYKIDWEKEEMTN</sequence>
<dbReference type="EMBL" id="CP000253">
    <property type="protein sequence ID" value="ABD30233.1"/>
    <property type="molecule type" value="Genomic_DNA"/>
</dbReference>
<dbReference type="RefSeq" id="YP_499665.1">
    <property type="nucleotide sequence ID" value="NC_007795.1"/>
</dbReference>
<dbReference type="PDB" id="4U6V">
    <property type="method" value="X-ray"/>
    <property type="resolution" value="2.56 A"/>
    <property type="chains" value="A/B=27-319"/>
</dbReference>
<dbReference type="PDBsum" id="4U6V"/>
<dbReference type="SMR" id="Q2G1X0"/>
<dbReference type="STRING" id="93061.SAOUHSC_01121"/>
<dbReference type="PaxDb" id="1280-SAXN108_1158"/>
<dbReference type="ABCD" id="Q2G1X0">
    <property type="antibodies" value="20 sequenced antibodies"/>
</dbReference>
<dbReference type="GeneID" id="3920722"/>
<dbReference type="KEGG" id="sao:SAOUHSC_01121"/>
<dbReference type="PATRIC" id="fig|93061.5.peg.1029"/>
<dbReference type="eggNOG" id="ENOG50348U0">
    <property type="taxonomic scope" value="Bacteria"/>
</dbReference>
<dbReference type="HOGENOM" id="CLU_055394_0_1_9"/>
<dbReference type="OrthoDB" id="1932679at2"/>
<dbReference type="EvolutionaryTrace" id="Q2G1X0"/>
<dbReference type="PRO" id="PR:Q2G1X0"/>
<dbReference type="Proteomes" id="UP000008816">
    <property type="component" value="Chromosome"/>
</dbReference>
<dbReference type="GO" id="GO:0005576">
    <property type="term" value="C:extracellular region"/>
    <property type="evidence" value="ECO:0007669"/>
    <property type="project" value="UniProtKB-SubCell"/>
</dbReference>
<dbReference type="GO" id="GO:0090729">
    <property type="term" value="F:toxin activity"/>
    <property type="evidence" value="ECO:0007669"/>
    <property type="project" value="UniProtKB-KW"/>
</dbReference>
<dbReference type="GO" id="GO:0051715">
    <property type="term" value="P:cytolysis in another organism"/>
    <property type="evidence" value="ECO:0007669"/>
    <property type="project" value="InterPro"/>
</dbReference>
<dbReference type="FunFam" id="2.70.240.10:FF:000001">
    <property type="entry name" value="Alpha-hemolysin"/>
    <property type="match status" value="1"/>
</dbReference>
<dbReference type="Gene3D" id="2.70.240.10">
    <property type="entry name" value="Leukocidin/porin MspA"/>
    <property type="match status" value="1"/>
</dbReference>
<dbReference type="InterPro" id="IPR005831">
    <property type="entry name" value="Aerolysin/haemolysin_CS"/>
</dbReference>
<dbReference type="InterPro" id="IPR003963">
    <property type="entry name" value="Bi-component_toxin_staph"/>
</dbReference>
<dbReference type="InterPro" id="IPR016183">
    <property type="entry name" value="Leukocidin/Hemolysin_toxin"/>
</dbReference>
<dbReference type="InterPro" id="IPR036435">
    <property type="entry name" value="Leukocidin/porin_MspA_sf"/>
</dbReference>
<dbReference type="NCBIfam" id="TIGR01002">
    <property type="entry name" value="hlyII"/>
    <property type="match status" value="1"/>
</dbReference>
<dbReference type="Pfam" id="PF07968">
    <property type="entry name" value="Leukocidin"/>
    <property type="match status" value="1"/>
</dbReference>
<dbReference type="PRINTS" id="PR01468">
    <property type="entry name" value="BICOMPNTOXIN"/>
</dbReference>
<dbReference type="SUPFAM" id="SSF56959">
    <property type="entry name" value="Leukocidin-like"/>
    <property type="match status" value="1"/>
</dbReference>
<dbReference type="PROSITE" id="PS00274">
    <property type="entry name" value="AEROLYSIN"/>
    <property type="match status" value="1"/>
</dbReference>
<proteinExistence type="evidence at protein level"/>
<feature type="signal peptide" evidence="2">
    <location>
        <begin position="1"/>
        <end position="26"/>
    </location>
</feature>
<feature type="chain" id="PRO_0000414600" description="Alpha-hemolysin">
    <location>
        <begin position="27"/>
        <end position="319"/>
    </location>
</feature>
<feature type="strand" evidence="7">
    <location>
        <begin position="44"/>
        <end position="55"/>
    </location>
</feature>
<feature type="turn" evidence="7">
    <location>
        <begin position="56"/>
        <end position="59"/>
    </location>
</feature>
<feature type="strand" evidence="7">
    <location>
        <begin position="60"/>
        <end position="71"/>
    </location>
</feature>
<feature type="strand" evidence="7">
    <location>
        <begin position="74"/>
        <end position="88"/>
    </location>
</feature>
<feature type="strand" evidence="7">
    <location>
        <begin position="92"/>
        <end position="98"/>
    </location>
</feature>
<feature type="strand" evidence="7">
    <location>
        <begin position="101"/>
        <end position="115"/>
    </location>
</feature>
<feature type="strand" evidence="7">
    <location>
        <begin position="123"/>
        <end position="129"/>
    </location>
</feature>
<feature type="strand" evidence="7">
    <location>
        <begin position="135"/>
        <end position="144"/>
    </location>
</feature>
<feature type="strand" evidence="7">
    <location>
        <begin position="146"/>
        <end position="148"/>
    </location>
</feature>
<feature type="strand" evidence="7">
    <location>
        <begin position="166"/>
        <end position="175"/>
    </location>
</feature>
<feature type="strand" evidence="7">
    <location>
        <begin position="179"/>
        <end position="184"/>
    </location>
</feature>
<feature type="strand" evidence="7">
    <location>
        <begin position="188"/>
        <end position="197"/>
    </location>
</feature>
<feature type="strand" evidence="7">
    <location>
        <begin position="200"/>
        <end position="202"/>
    </location>
</feature>
<feature type="strand" evidence="7">
    <location>
        <begin position="205"/>
        <end position="208"/>
    </location>
</feature>
<feature type="turn" evidence="7">
    <location>
        <begin position="215"/>
        <end position="217"/>
    </location>
</feature>
<feature type="helix" evidence="7">
    <location>
        <begin position="232"/>
        <end position="234"/>
    </location>
</feature>
<feature type="helix" evidence="7">
    <location>
        <begin position="239"/>
        <end position="241"/>
    </location>
</feature>
<feature type="turn" evidence="7">
    <location>
        <begin position="244"/>
        <end position="248"/>
    </location>
</feature>
<feature type="strand" evidence="7">
    <location>
        <begin position="254"/>
        <end position="263"/>
    </location>
</feature>
<feature type="strand" evidence="7">
    <location>
        <begin position="268"/>
        <end position="286"/>
    </location>
</feature>
<feature type="strand" evidence="7">
    <location>
        <begin position="288"/>
        <end position="311"/>
    </location>
</feature>
<feature type="turn" evidence="7">
    <location>
        <begin position="312"/>
        <end position="315"/>
    </location>
</feature>
<feature type="strand" evidence="7">
    <location>
        <begin position="316"/>
        <end position="318"/>
    </location>
</feature>
<organism>
    <name type="scientific">Staphylococcus aureus (strain NCTC 8325 / PS 47)</name>
    <dbReference type="NCBI Taxonomy" id="93061"/>
    <lineage>
        <taxon>Bacteria</taxon>
        <taxon>Bacillati</taxon>
        <taxon>Bacillota</taxon>
        <taxon>Bacilli</taxon>
        <taxon>Bacillales</taxon>
        <taxon>Staphylococcaceae</taxon>
        <taxon>Staphylococcus</taxon>
    </lineage>
</organism>
<protein>
    <recommendedName>
        <fullName>Alpha-hemolysin</fullName>
        <shortName>Alpha-HL</shortName>
    </recommendedName>
    <alternativeName>
        <fullName>Alpha-toxin</fullName>
    </alternativeName>
</protein>
<evidence type="ECO:0000250" key="1">
    <source>
        <dbReference type="UniProtKB" id="P09616"/>
    </source>
</evidence>
<evidence type="ECO:0000255" key="2"/>
<evidence type="ECO:0000269" key="3">
    <source>
    </source>
</evidence>
<evidence type="ECO:0000269" key="4">
    <source>
    </source>
</evidence>
<evidence type="ECO:0000305" key="5"/>
<evidence type="ECO:0000305" key="6">
    <source>
    </source>
</evidence>
<evidence type="ECO:0007829" key="7">
    <source>
        <dbReference type="PDB" id="4U6V"/>
    </source>
</evidence>
<comment type="function">
    <text evidence="1 6">Alpha-toxin binds to the membrane of eukaryotic cells resulting in the release of low-molecular weight molecules and leading to an eventual osmotic lysis. Inhibits host neutrophil chemotaxis to the lesion region (Probable). Heptamer oligomerization and pore formation is required for lytic activity (By similarity).</text>
</comment>
<comment type="subunit">
    <text evidence="1">Self-assembles to form first a non-lytic oligomeric intermediate and then, a mushroom-shaped homoheptamer structure of 100 Angstroms in length and up to 100 Angstroms in diameter.</text>
</comment>
<comment type="subcellular location">
    <subcellularLocation>
        <location evidence="3">Secreted</location>
    </subcellularLocation>
    <text evidence="1">Secreted as a monomer. After oligomerization and pore formation, the complex is translocated across the bilayer, probably via the Gly-rich domain of each strand.</text>
</comment>
<comment type="induction">
    <text evidence="3">Less protein is secreted in a secG or double secG/secY2 mutant (at protein level).</text>
</comment>
<comment type="domain">
    <text evidence="1">The mushroom-shaped heptamer is composed of a cap domain (comprising 7 beta sandwiches and the amino latches of each protomer), 7 rim regions whose protruding strands may interact with the membrane bilayer, and the stem domain (52 Angstroms in length, 26 Angstroms in diameter) which forms the transmembrane pore.</text>
</comment>
<comment type="disruption phenotype">
    <text evidence="4">About 10-fold decrease in virulence in mice, increased presence of neutrophils in the injection region.</text>
</comment>
<comment type="similarity">
    <text evidence="5">Belongs to the aerolysin family.</text>
</comment>
<name>HLA_STAA8</name>
<reference key="1">
    <citation type="book" date="2006" name="Gram positive pathogens, 2nd edition">
        <title>The Staphylococcus aureus NCTC 8325 genome.</title>
        <editorList>
            <person name="Fischetti V."/>
            <person name="Novick R."/>
            <person name="Ferretti J."/>
            <person name="Portnoy D."/>
            <person name="Rood J."/>
        </editorList>
        <authorList>
            <person name="Gillaspy A.F."/>
            <person name="Worrell V."/>
            <person name="Orvis J."/>
            <person name="Roe B.A."/>
            <person name="Dyer D.W."/>
            <person name="Iandolo J.J."/>
        </authorList>
    </citation>
    <scope>NUCLEOTIDE SEQUENCE [LARGE SCALE GENOMIC DNA]</scope>
    <source>
        <strain>NCTC 8325 / PS 47</strain>
    </source>
</reference>
<reference key="2">
    <citation type="journal article" date="1987" name="Infect. Immun.">
        <title>Virulence of protein A-deficient and alpha-toxin-deficient mutants of Staphylococcus aureus isolated by allele replacement.</title>
        <authorList>
            <person name="Patel A.H."/>
            <person name="Nowlan P."/>
            <person name="Weavers E.D."/>
            <person name="Foster T."/>
        </authorList>
    </citation>
    <scope>FUNCTION</scope>
    <scope>DISRUPTION PHENOTYPE</scope>
    <source>
        <strain>8325-4</strain>
    </source>
</reference>
<reference key="3">
    <citation type="journal article" date="2010" name="J. Bacteriol.">
        <title>Synthetic effects of secG and secY2 mutations on exoproteome biogenesis in Staphylococcus aureus.</title>
        <authorList>
            <person name="Sibbald M.J."/>
            <person name="Winter T."/>
            <person name="van der Kooi-Pol M.M."/>
            <person name="Buist G."/>
            <person name="Tsompanidou E."/>
            <person name="Bosma T."/>
            <person name="Schafer T."/>
            <person name="Ohlsen K."/>
            <person name="Hecker M."/>
            <person name="Antelmann H."/>
            <person name="Engelmann S."/>
            <person name="van Dijl J.M."/>
        </authorList>
    </citation>
    <scope>IDENTIFICATION BY MASS SPECTROMETRY</scope>
    <scope>SUBCELLULAR LOCATION</scope>
    <scope>INDUCTION</scope>
    <source>
        <strain>RN4220</strain>
    </source>
</reference>
<keyword id="KW-0002">3D-structure</keyword>
<keyword id="KW-0204">Cytolysis</keyword>
<keyword id="KW-0354">Hemolysis</keyword>
<keyword id="KW-1185">Reference proteome</keyword>
<keyword id="KW-0964">Secreted</keyword>
<keyword id="KW-0732">Signal</keyword>
<keyword id="KW-0800">Toxin</keyword>
<keyword id="KW-0843">Virulence</keyword>
<gene>
    <name type="primary">hly</name>
    <name type="synonym">hla</name>
    <name type="ordered locus">SAOUHSC_01121</name>
</gene>